<feature type="chain" id="PRO_1000078447" description="ATP-dependent protease ATPase subunit HslU">
    <location>
        <begin position="1"/>
        <end position="443"/>
    </location>
</feature>
<feature type="binding site" evidence="1">
    <location>
        <position position="18"/>
    </location>
    <ligand>
        <name>ATP</name>
        <dbReference type="ChEBI" id="CHEBI:30616"/>
    </ligand>
</feature>
<feature type="binding site" evidence="1">
    <location>
        <begin position="60"/>
        <end position="65"/>
    </location>
    <ligand>
        <name>ATP</name>
        <dbReference type="ChEBI" id="CHEBI:30616"/>
    </ligand>
</feature>
<feature type="binding site" evidence="1">
    <location>
        <position position="256"/>
    </location>
    <ligand>
        <name>ATP</name>
        <dbReference type="ChEBI" id="CHEBI:30616"/>
    </ligand>
</feature>
<feature type="binding site" evidence="1">
    <location>
        <position position="321"/>
    </location>
    <ligand>
        <name>ATP</name>
        <dbReference type="ChEBI" id="CHEBI:30616"/>
    </ligand>
</feature>
<feature type="binding site" evidence="1">
    <location>
        <position position="393"/>
    </location>
    <ligand>
        <name>ATP</name>
        <dbReference type="ChEBI" id="CHEBI:30616"/>
    </ligand>
</feature>
<gene>
    <name evidence="1" type="primary">hslU</name>
    <name type="ordered locus">HSM_0562</name>
</gene>
<name>HSLU_HISS2</name>
<comment type="function">
    <text evidence="1">ATPase subunit of a proteasome-like degradation complex; this subunit has chaperone activity. The binding of ATP and its subsequent hydrolysis by HslU are essential for unfolding of protein substrates subsequently hydrolyzed by HslV. HslU recognizes the N-terminal part of its protein substrates and unfolds these before they are guided to HslV for hydrolysis.</text>
</comment>
<comment type="subunit">
    <text evidence="1">A double ring-shaped homohexamer of HslV is capped on each side by a ring-shaped HslU homohexamer. The assembly of the HslU/HslV complex is dependent on binding of ATP.</text>
</comment>
<comment type="subcellular location">
    <subcellularLocation>
        <location evidence="1">Cytoplasm</location>
    </subcellularLocation>
</comment>
<comment type="similarity">
    <text evidence="1">Belongs to the ClpX chaperone family. HslU subfamily.</text>
</comment>
<organism>
    <name type="scientific">Histophilus somni (strain 2336)</name>
    <name type="common">Haemophilus somnus</name>
    <dbReference type="NCBI Taxonomy" id="228400"/>
    <lineage>
        <taxon>Bacteria</taxon>
        <taxon>Pseudomonadati</taxon>
        <taxon>Pseudomonadota</taxon>
        <taxon>Gammaproteobacteria</taxon>
        <taxon>Pasteurellales</taxon>
        <taxon>Pasteurellaceae</taxon>
        <taxon>Histophilus</taxon>
    </lineage>
</organism>
<evidence type="ECO:0000255" key="1">
    <source>
        <dbReference type="HAMAP-Rule" id="MF_00249"/>
    </source>
</evidence>
<protein>
    <recommendedName>
        <fullName evidence="1">ATP-dependent protease ATPase subunit HslU</fullName>
    </recommendedName>
    <alternativeName>
        <fullName evidence="1">Unfoldase HslU</fullName>
    </alternativeName>
</protein>
<accession>B0US05</accession>
<keyword id="KW-0067">ATP-binding</keyword>
<keyword id="KW-0143">Chaperone</keyword>
<keyword id="KW-0963">Cytoplasm</keyword>
<keyword id="KW-0547">Nucleotide-binding</keyword>
<keyword id="KW-0346">Stress response</keyword>
<reference key="1">
    <citation type="submission" date="2008-02" db="EMBL/GenBank/DDBJ databases">
        <title>Complete sequence of Haemophilus somnus 2336.</title>
        <authorList>
            <consortium name="US DOE Joint Genome Institute"/>
            <person name="Siddaramappa S."/>
            <person name="Duncan A.J."/>
            <person name="Challacombe J.F."/>
            <person name="Rainey D."/>
            <person name="Gillaspy A.F."/>
            <person name="Carson M."/>
            <person name="Gipson J."/>
            <person name="Gipson M."/>
            <person name="Bruce D."/>
            <person name="Detter J.C."/>
            <person name="Han C.S."/>
            <person name="Land M."/>
            <person name="Tapia R."/>
            <person name="Thompson L.S."/>
            <person name="Orvis J."/>
            <person name="Zaitshik J."/>
            <person name="Barnes G."/>
            <person name="Brettin T.S."/>
            <person name="Dyer D.W."/>
            <person name="Inzana T.J."/>
        </authorList>
    </citation>
    <scope>NUCLEOTIDE SEQUENCE [LARGE SCALE GENOMIC DNA]</scope>
    <source>
        <strain>2336</strain>
    </source>
</reference>
<sequence length="443" mass="49745">MSEMTPREIVSELDQHIIGQADAKRAVAIALRNRWRRMQLQEPLRHEVTPKNILMIGPTGVGKTEIARRLAKLANAPFIKVEATKFTEVGYVGKEVDSIIRDLTDSAMKLVRQTEIEKNRFRAEEMAEERVLDTLLPPAKDQWGQIEERDTNTNTRQIFRKKLREGQLDDREIEIDIAAPNIGVEIMAPPGMEEMTNQLQSMFQNLSSGQTKKRKMKIKDALKALIDDEAAKLINPEELKQKAIDAVEQNGIVFIDEIDKICKKGEYSGADVSREGVQRDLLPLVEGSTVNTKHGMVKTDHILFIASGAFQVARPSDLIPELQGRLPIRVELSALTAKDFERILTEPNASLTEQYQALMATEGVDIEFTESAVKKIAEAAFRVNEKTENIGARRLHTVMERLMDKISFDASEMSGQNVIIDGDYVTGALGDVVENEDLSHFIL</sequence>
<dbReference type="EMBL" id="CP000947">
    <property type="protein sequence ID" value="ACA32214.1"/>
    <property type="molecule type" value="Genomic_DNA"/>
</dbReference>
<dbReference type="RefSeq" id="WP_012341395.1">
    <property type="nucleotide sequence ID" value="NC_010519.1"/>
</dbReference>
<dbReference type="SMR" id="B0US05"/>
<dbReference type="STRING" id="228400.HSM_0562"/>
<dbReference type="GeneID" id="31486844"/>
<dbReference type="KEGG" id="hsm:HSM_0562"/>
<dbReference type="HOGENOM" id="CLU_033123_0_0_6"/>
<dbReference type="GO" id="GO:0009376">
    <property type="term" value="C:HslUV protease complex"/>
    <property type="evidence" value="ECO:0007669"/>
    <property type="project" value="UniProtKB-UniRule"/>
</dbReference>
<dbReference type="GO" id="GO:0005524">
    <property type="term" value="F:ATP binding"/>
    <property type="evidence" value="ECO:0007669"/>
    <property type="project" value="UniProtKB-UniRule"/>
</dbReference>
<dbReference type="GO" id="GO:0016887">
    <property type="term" value="F:ATP hydrolysis activity"/>
    <property type="evidence" value="ECO:0007669"/>
    <property type="project" value="InterPro"/>
</dbReference>
<dbReference type="GO" id="GO:0008233">
    <property type="term" value="F:peptidase activity"/>
    <property type="evidence" value="ECO:0007669"/>
    <property type="project" value="InterPro"/>
</dbReference>
<dbReference type="GO" id="GO:0036402">
    <property type="term" value="F:proteasome-activating activity"/>
    <property type="evidence" value="ECO:0007669"/>
    <property type="project" value="UniProtKB-UniRule"/>
</dbReference>
<dbReference type="GO" id="GO:0043335">
    <property type="term" value="P:protein unfolding"/>
    <property type="evidence" value="ECO:0007669"/>
    <property type="project" value="UniProtKB-UniRule"/>
</dbReference>
<dbReference type="GO" id="GO:0051603">
    <property type="term" value="P:proteolysis involved in protein catabolic process"/>
    <property type="evidence" value="ECO:0007669"/>
    <property type="project" value="TreeGrafter"/>
</dbReference>
<dbReference type="CDD" id="cd19498">
    <property type="entry name" value="RecA-like_HslU"/>
    <property type="match status" value="1"/>
</dbReference>
<dbReference type="FunFam" id="1.10.8.10:FF:000028">
    <property type="entry name" value="ATP-dependent protease ATPase subunit HslU"/>
    <property type="match status" value="1"/>
</dbReference>
<dbReference type="FunFam" id="1.10.8.60:FF:000027">
    <property type="entry name" value="ATP-dependent protease ATPase subunit HslU"/>
    <property type="match status" value="1"/>
</dbReference>
<dbReference type="FunFam" id="3.40.50.300:FF:000213">
    <property type="entry name" value="ATP-dependent protease ATPase subunit HslU"/>
    <property type="match status" value="1"/>
</dbReference>
<dbReference type="FunFam" id="3.40.50.300:FF:000220">
    <property type="entry name" value="ATP-dependent protease ATPase subunit HslU"/>
    <property type="match status" value="1"/>
</dbReference>
<dbReference type="Gene3D" id="1.10.8.60">
    <property type="match status" value="1"/>
</dbReference>
<dbReference type="Gene3D" id="1.10.8.10">
    <property type="entry name" value="DNA helicase RuvA subunit, C-terminal domain"/>
    <property type="match status" value="1"/>
</dbReference>
<dbReference type="Gene3D" id="3.40.50.300">
    <property type="entry name" value="P-loop containing nucleotide triphosphate hydrolases"/>
    <property type="match status" value="2"/>
</dbReference>
<dbReference type="HAMAP" id="MF_00249">
    <property type="entry name" value="HslU"/>
    <property type="match status" value="1"/>
</dbReference>
<dbReference type="InterPro" id="IPR003593">
    <property type="entry name" value="AAA+_ATPase"/>
</dbReference>
<dbReference type="InterPro" id="IPR050052">
    <property type="entry name" value="ATP-dep_Clp_protease_ClpX"/>
</dbReference>
<dbReference type="InterPro" id="IPR003959">
    <property type="entry name" value="ATPase_AAA_core"/>
</dbReference>
<dbReference type="InterPro" id="IPR019489">
    <property type="entry name" value="Clp_ATPase_C"/>
</dbReference>
<dbReference type="InterPro" id="IPR004491">
    <property type="entry name" value="HslU"/>
</dbReference>
<dbReference type="InterPro" id="IPR027417">
    <property type="entry name" value="P-loop_NTPase"/>
</dbReference>
<dbReference type="NCBIfam" id="TIGR00390">
    <property type="entry name" value="hslU"/>
    <property type="match status" value="1"/>
</dbReference>
<dbReference type="NCBIfam" id="NF003544">
    <property type="entry name" value="PRK05201.1"/>
    <property type="match status" value="1"/>
</dbReference>
<dbReference type="PANTHER" id="PTHR48102">
    <property type="entry name" value="ATP-DEPENDENT CLP PROTEASE ATP-BINDING SUBUNIT CLPX-LIKE, MITOCHONDRIAL-RELATED"/>
    <property type="match status" value="1"/>
</dbReference>
<dbReference type="PANTHER" id="PTHR48102:SF3">
    <property type="entry name" value="ATP-DEPENDENT PROTEASE ATPASE SUBUNIT HSLU"/>
    <property type="match status" value="1"/>
</dbReference>
<dbReference type="Pfam" id="PF00004">
    <property type="entry name" value="AAA"/>
    <property type="match status" value="1"/>
</dbReference>
<dbReference type="Pfam" id="PF07724">
    <property type="entry name" value="AAA_2"/>
    <property type="match status" value="1"/>
</dbReference>
<dbReference type="Pfam" id="PF10431">
    <property type="entry name" value="ClpB_D2-small"/>
    <property type="match status" value="1"/>
</dbReference>
<dbReference type="SMART" id="SM00382">
    <property type="entry name" value="AAA"/>
    <property type="match status" value="1"/>
</dbReference>
<dbReference type="SMART" id="SM01086">
    <property type="entry name" value="ClpB_D2-small"/>
    <property type="match status" value="1"/>
</dbReference>
<dbReference type="SUPFAM" id="SSF52540">
    <property type="entry name" value="P-loop containing nucleoside triphosphate hydrolases"/>
    <property type="match status" value="1"/>
</dbReference>
<proteinExistence type="inferred from homology"/>